<gene>
    <name type="primary">relA</name>
    <name type="ordered locus">Z4099</name>
    <name type="ordered locus">ECs3644</name>
</gene>
<dbReference type="EC" id="2.7.6.5"/>
<dbReference type="EMBL" id="AE005174">
    <property type="protein sequence ID" value="AAG57897.1"/>
    <property type="molecule type" value="Genomic_DNA"/>
</dbReference>
<dbReference type="EMBL" id="BA000007">
    <property type="protein sequence ID" value="BAB37067.1"/>
    <property type="molecule type" value="Genomic_DNA"/>
</dbReference>
<dbReference type="PIR" id="D91084">
    <property type="entry name" value="D91084"/>
</dbReference>
<dbReference type="PIR" id="E85929">
    <property type="entry name" value="E85929"/>
</dbReference>
<dbReference type="RefSeq" id="NP_311671.1">
    <property type="nucleotide sequence ID" value="NC_002695.1"/>
</dbReference>
<dbReference type="RefSeq" id="WP_000226815.1">
    <property type="nucleotide sequence ID" value="NZ_VOAI01000003.1"/>
</dbReference>
<dbReference type="EMDB" id="EMD-4001"/>
<dbReference type="SMR" id="P0AG22"/>
<dbReference type="STRING" id="155864.Z4099"/>
<dbReference type="DNASU" id="958253"/>
<dbReference type="GeneID" id="916555"/>
<dbReference type="GeneID" id="93779214"/>
<dbReference type="KEGG" id="ece:Z4099"/>
<dbReference type="KEGG" id="ecs:ECs_3644"/>
<dbReference type="PATRIC" id="fig|386585.9.peg.3808"/>
<dbReference type="eggNOG" id="COG0317">
    <property type="taxonomic scope" value="Bacteria"/>
</dbReference>
<dbReference type="HOGENOM" id="CLU_012300_3_0_6"/>
<dbReference type="OMA" id="TEIGHNC"/>
<dbReference type="UniPathway" id="UPA00908">
    <property type="reaction ID" value="UER00884"/>
</dbReference>
<dbReference type="Proteomes" id="UP000000558">
    <property type="component" value="Chromosome"/>
</dbReference>
<dbReference type="Proteomes" id="UP000002519">
    <property type="component" value="Chromosome"/>
</dbReference>
<dbReference type="GO" id="GO:0005886">
    <property type="term" value="C:plasma membrane"/>
    <property type="evidence" value="ECO:0007669"/>
    <property type="project" value="TreeGrafter"/>
</dbReference>
<dbReference type="GO" id="GO:0005524">
    <property type="term" value="F:ATP binding"/>
    <property type="evidence" value="ECO:0007669"/>
    <property type="project" value="UniProtKB-KW"/>
</dbReference>
<dbReference type="GO" id="GO:0005525">
    <property type="term" value="F:GTP binding"/>
    <property type="evidence" value="ECO:0007669"/>
    <property type="project" value="UniProtKB-KW"/>
</dbReference>
<dbReference type="GO" id="GO:0008728">
    <property type="term" value="F:GTP diphosphokinase activity"/>
    <property type="evidence" value="ECO:0007669"/>
    <property type="project" value="UniProtKB-EC"/>
</dbReference>
<dbReference type="GO" id="GO:0008893">
    <property type="term" value="F:guanosine-3',5'-bis(diphosphate) 3'-diphosphatase activity"/>
    <property type="evidence" value="ECO:0007669"/>
    <property type="project" value="TreeGrafter"/>
</dbReference>
<dbReference type="GO" id="GO:0016301">
    <property type="term" value="F:kinase activity"/>
    <property type="evidence" value="ECO:0007669"/>
    <property type="project" value="UniProtKB-KW"/>
</dbReference>
<dbReference type="GO" id="GO:0015970">
    <property type="term" value="P:guanosine tetraphosphate biosynthetic process"/>
    <property type="evidence" value="ECO:0007669"/>
    <property type="project" value="UniProtKB-UniPathway"/>
</dbReference>
<dbReference type="GO" id="GO:0042594">
    <property type="term" value="P:response to starvation"/>
    <property type="evidence" value="ECO:0007669"/>
    <property type="project" value="TreeGrafter"/>
</dbReference>
<dbReference type="CDD" id="cd04876">
    <property type="entry name" value="ACT_RelA-SpoT"/>
    <property type="match status" value="1"/>
</dbReference>
<dbReference type="CDD" id="cd05399">
    <property type="entry name" value="NT_Rel-Spo_like"/>
    <property type="match status" value="1"/>
</dbReference>
<dbReference type="CDD" id="cd01668">
    <property type="entry name" value="TGS_RSH"/>
    <property type="match status" value="1"/>
</dbReference>
<dbReference type="FunFam" id="1.10.3210.10:FF:000007">
    <property type="entry name" value="GTP pyrophosphokinase"/>
    <property type="match status" value="1"/>
</dbReference>
<dbReference type="FunFam" id="3.10.20.30:FF:000002">
    <property type="entry name" value="GTP pyrophosphokinase (RelA/SpoT)"/>
    <property type="match status" value="1"/>
</dbReference>
<dbReference type="FunFam" id="3.30.460.10:FF:000001">
    <property type="entry name" value="GTP pyrophosphokinase RelA"/>
    <property type="match status" value="1"/>
</dbReference>
<dbReference type="FunFam" id="3.30.70.260:FF:000010">
    <property type="entry name" value="GTP pyrophosphokinase RelA"/>
    <property type="match status" value="1"/>
</dbReference>
<dbReference type="Gene3D" id="3.10.20.30">
    <property type="match status" value="1"/>
</dbReference>
<dbReference type="Gene3D" id="3.30.70.260">
    <property type="match status" value="1"/>
</dbReference>
<dbReference type="Gene3D" id="3.30.460.10">
    <property type="entry name" value="Beta Polymerase, domain 2"/>
    <property type="match status" value="1"/>
</dbReference>
<dbReference type="Gene3D" id="1.10.3210.10">
    <property type="entry name" value="Hypothetical protein af1432"/>
    <property type="match status" value="1"/>
</dbReference>
<dbReference type="InterPro" id="IPR045865">
    <property type="entry name" value="ACT-like_dom_sf"/>
</dbReference>
<dbReference type="InterPro" id="IPR002912">
    <property type="entry name" value="ACT_dom"/>
</dbReference>
<dbReference type="InterPro" id="IPR012675">
    <property type="entry name" value="Beta-grasp_dom_sf"/>
</dbReference>
<dbReference type="InterPro" id="IPR006674">
    <property type="entry name" value="HD_domain"/>
</dbReference>
<dbReference type="InterPro" id="IPR043519">
    <property type="entry name" value="NT_sf"/>
</dbReference>
<dbReference type="InterPro" id="IPR004811">
    <property type="entry name" value="RelA/Spo_fam"/>
</dbReference>
<dbReference type="InterPro" id="IPR045600">
    <property type="entry name" value="RelA/SpoT_AH_RIS"/>
</dbReference>
<dbReference type="InterPro" id="IPR007685">
    <property type="entry name" value="RelA_SpoT"/>
</dbReference>
<dbReference type="InterPro" id="IPR004095">
    <property type="entry name" value="TGS"/>
</dbReference>
<dbReference type="InterPro" id="IPR012676">
    <property type="entry name" value="TGS-like"/>
</dbReference>
<dbReference type="InterPro" id="IPR033655">
    <property type="entry name" value="TGS_RelA/SpoT"/>
</dbReference>
<dbReference type="NCBIfam" id="NF008124">
    <property type="entry name" value="PRK10872.1"/>
    <property type="match status" value="1"/>
</dbReference>
<dbReference type="NCBIfam" id="TIGR00691">
    <property type="entry name" value="spoT_relA"/>
    <property type="match status" value="1"/>
</dbReference>
<dbReference type="PANTHER" id="PTHR21262:SF31">
    <property type="entry name" value="GTP PYROPHOSPHOKINASE"/>
    <property type="match status" value="1"/>
</dbReference>
<dbReference type="PANTHER" id="PTHR21262">
    <property type="entry name" value="GUANOSINE-3',5'-BIS DIPHOSPHATE 3'-PYROPHOSPHOHYDROLASE"/>
    <property type="match status" value="1"/>
</dbReference>
<dbReference type="Pfam" id="PF13291">
    <property type="entry name" value="ACT_4"/>
    <property type="match status" value="1"/>
</dbReference>
<dbReference type="Pfam" id="PF13328">
    <property type="entry name" value="HD_4"/>
    <property type="match status" value="1"/>
</dbReference>
<dbReference type="Pfam" id="PF19296">
    <property type="entry name" value="RelA_AH_RIS"/>
    <property type="match status" value="1"/>
</dbReference>
<dbReference type="Pfam" id="PF04607">
    <property type="entry name" value="RelA_SpoT"/>
    <property type="match status" value="1"/>
</dbReference>
<dbReference type="Pfam" id="PF02824">
    <property type="entry name" value="TGS"/>
    <property type="match status" value="1"/>
</dbReference>
<dbReference type="SMART" id="SM00954">
    <property type="entry name" value="RelA_SpoT"/>
    <property type="match status" value="1"/>
</dbReference>
<dbReference type="SUPFAM" id="SSF55021">
    <property type="entry name" value="ACT-like"/>
    <property type="match status" value="1"/>
</dbReference>
<dbReference type="SUPFAM" id="SSF109604">
    <property type="entry name" value="HD-domain/PDEase-like"/>
    <property type="match status" value="1"/>
</dbReference>
<dbReference type="SUPFAM" id="SSF81301">
    <property type="entry name" value="Nucleotidyltransferase"/>
    <property type="match status" value="1"/>
</dbReference>
<dbReference type="SUPFAM" id="SSF81271">
    <property type="entry name" value="TGS-like"/>
    <property type="match status" value="1"/>
</dbReference>
<dbReference type="PROSITE" id="PS51671">
    <property type="entry name" value="ACT"/>
    <property type="match status" value="1"/>
</dbReference>
<dbReference type="PROSITE" id="PS51831">
    <property type="entry name" value="HD"/>
    <property type="match status" value="1"/>
</dbReference>
<dbReference type="PROSITE" id="PS51880">
    <property type="entry name" value="TGS"/>
    <property type="match status" value="1"/>
</dbReference>
<organism>
    <name type="scientific">Escherichia coli O157:H7</name>
    <dbReference type="NCBI Taxonomy" id="83334"/>
    <lineage>
        <taxon>Bacteria</taxon>
        <taxon>Pseudomonadati</taxon>
        <taxon>Pseudomonadota</taxon>
        <taxon>Gammaproteobacteria</taxon>
        <taxon>Enterobacterales</taxon>
        <taxon>Enterobacteriaceae</taxon>
        <taxon>Escherichia</taxon>
    </lineage>
</organism>
<proteinExistence type="inferred from homology"/>
<protein>
    <recommendedName>
        <fullName>GTP pyrophosphokinase</fullName>
        <ecNumber>2.7.6.5</ecNumber>
    </recommendedName>
    <alternativeName>
        <fullName>(p)ppGpp synthase</fullName>
    </alternativeName>
    <alternativeName>
        <fullName>ATP:GTP 3'-pyrophosphotransferase</fullName>
    </alternativeName>
    <alternativeName>
        <fullName>ppGpp synthase I</fullName>
    </alternativeName>
</protein>
<name>RELA_ECO57</name>
<sequence length="744" mass="83876">MVAVRSAHINKAGEFDPEKWIASLGITSQKSCECLAETWAYCLQQTQGHPDASLLLWRGVEMVEILSTLSMDIDTLRAALLFPLADANVVSEDVLRESVGKSVVNLIHGVRDMAAIRQLKATHTDSVSSEQVDNVRRMLLAMVDDFRCVVIKLAERIAHLREVKDAPEDERVLAAKECTNIYAPLANRLGIGQLKWELEDYCFRYLHPTEYKRIAKLLHERRLDREHYIEEFVGHLRAEMKAEGVKAEVYGRPKHIYSIWRKMQKKNLAFDELFDVRAVRIVAERLQDCYAALGIVHTHYRHLPDEFDDYVANPKPNGYQSIHTVVLGPGGKTVEIQIRTKQMHEDAELGVAAHWKYKEGAAAGGARSGHEDRIAWLRKLIAWQEEMADSGEMLDEVRSQVFDDRVYVFTPKGDVVDLPAGSTPLDFAYHIHSDVGHRCIGAKIGGRIVPFTYQLQMGDQIEIITQKQPNPSRDWLNPNLGYVTTSRGRSKIHAWFRKQDRDKNILAGRQILDDELEHLGISLKEAEKHLLPRYNFNDVDELLAAIGGGDIRLNQMVNFLQSQFNKPSAEEQDAAALKQLQQKSYTPQNRSKDNGRVVVEGVGNLMHHIARCCQPIPGDEIVGFITQGRGISVHRADCEQLAELRSHAPERIVDAVWGESYSAGYSLVVRVVANDRSGLLRDITTILANEKVNVLGVASRSDTKQQLATIDMTIEIYNLQVLGRVLGKLNQVPDVIDARRLHGS</sequence>
<keyword id="KW-0067">ATP-binding</keyword>
<keyword id="KW-0342">GTP-binding</keyword>
<keyword id="KW-0418">Kinase</keyword>
<keyword id="KW-0547">Nucleotide-binding</keyword>
<keyword id="KW-1185">Reference proteome</keyword>
<keyword id="KW-0808">Transferase</keyword>
<comment type="function">
    <text evidence="1">In eubacteria ppGpp (guanosine 3'-diphosphate 5'-diphosphate) is a mediator of the stringent response that coordinates a variety of cellular activities in response to changes in nutritional abundance. This enzyme catalyzes the formation of pppGpp which is then hydrolyzed to form ppGpp (By similarity).</text>
</comment>
<comment type="catalytic activity">
    <reaction>
        <text>GTP + ATP = guanosine 3'-diphosphate 5'-triphosphate + AMP</text>
        <dbReference type="Rhea" id="RHEA:22088"/>
        <dbReference type="ChEBI" id="CHEBI:30616"/>
        <dbReference type="ChEBI" id="CHEBI:37565"/>
        <dbReference type="ChEBI" id="CHEBI:142410"/>
        <dbReference type="ChEBI" id="CHEBI:456215"/>
        <dbReference type="EC" id="2.7.6.5"/>
    </reaction>
</comment>
<comment type="pathway">
    <text>Purine metabolism; ppGpp biosynthesis; ppGpp from GTP: step 1/2.</text>
</comment>
<comment type="similarity">
    <text evidence="5">Belongs to the RelA/SpoT family.</text>
</comment>
<evidence type="ECO:0000250" key="1"/>
<evidence type="ECO:0000255" key="2">
    <source>
        <dbReference type="PROSITE-ProRule" id="PRU01007"/>
    </source>
</evidence>
<evidence type="ECO:0000255" key="3">
    <source>
        <dbReference type="PROSITE-ProRule" id="PRU01175"/>
    </source>
</evidence>
<evidence type="ECO:0000255" key="4">
    <source>
        <dbReference type="PROSITE-ProRule" id="PRU01228"/>
    </source>
</evidence>
<evidence type="ECO:0000305" key="5"/>
<accession>P0AG22</accession>
<accession>P11585</accession>
<feature type="chain" id="PRO_0000166547" description="GTP pyrophosphokinase">
    <location>
        <begin position="1"/>
        <end position="744"/>
    </location>
</feature>
<feature type="domain" description="HD" evidence="3">
    <location>
        <begin position="55"/>
        <end position="160"/>
    </location>
</feature>
<feature type="domain" description="TGS" evidence="4">
    <location>
        <begin position="404"/>
        <end position="465"/>
    </location>
</feature>
<feature type="domain" description="ACT" evidence="2">
    <location>
        <begin position="668"/>
        <end position="743"/>
    </location>
</feature>
<reference key="1">
    <citation type="journal article" date="2001" name="Nature">
        <title>Genome sequence of enterohaemorrhagic Escherichia coli O157:H7.</title>
        <authorList>
            <person name="Perna N.T."/>
            <person name="Plunkett G. III"/>
            <person name="Burland V."/>
            <person name="Mau B."/>
            <person name="Glasner J.D."/>
            <person name="Rose D.J."/>
            <person name="Mayhew G.F."/>
            <person name="Evans P.S."/>
            <person name="Gregor J."/>
            <person name="Kirkpatrick H.A."/>
            <person name="Posfai G."/>
            <person name="Hackett J."/>
            <person name="Klink S."/>
            <person name="Boutin A."/>
            <person name="Shao Y."/>
            <person name="Miller L."/>
            <person name="Grotbeck E.J."/>
            <person name="Davis N.W."/>
            <person name="Lim A."/>
            <person name="Dimalanta E.T."/>
            <person name="Potamousis K."/>
            <person name="Apodaca J."/>
            <person name="Anantharaman T.S."/>
            <person name="Lin J."/>
            <person name="Yen G."/>
            <person name="Schwartz D.C."/>
            <person name="Welch R.A."/>
            <person name="Blattner F.R."/>
        </authorList>
    </citation>
    <scope>NUCLEOTIDE SEQUENCE [LARGE SCALE GENOMIC DNA]</scope>
    <source>
        <strain>O157:H7 / EDL933 / ATCC 700927 / EHEC</strain>
    </source>
</reference>
<reference key="2">
    <citation type="journal article" date="2001" name="DNA Res.">
        <title>Complete genome sequence of enterohemorrhagic Escherichia coli O157:H7 and genomic comparison with a laboratory strain K-12.</title>
        <authorList>
            <person name="Hayashi T."/>
            <person name="Makino K."/>
            <person name="Ohnishi M."/>
            <person name="Kurokawa K."/>
            <person name="Ishii K."/>
            <person name="Yokoyama K."/>
            <person name="Han C.-G."/>
            <person name="Ohtsubo E."/>
            <person name="Nakayama K."/>
            <person name="Murata T."/>
            <person name="Tanaka M."/>
            <person name="Tobe T."/>
            <person name="Iida T."/>
            <person name="Takami H."/>
            <person name="Honda T."/>
            <person name="Sasakawa C."/>
            <person name="Ogasawara N."/>
            <person name="Yasunaga T."/>
            <person name="Kuhara S."/>
            <person name="Shiba T."/>
            <person name="Hattori M."/>
            <person name="Shinagawa H."/>
        </authorList>
    </citation>
    <scope>NUCLEOTIDE SEQUENCE [LARGE SCALE GENOMIC DNA]</scope>
    <source>
        <strain>O157:H7 / Sakai / RIMD 0509952 / EHEC</strain>
    </source>
</reference>